<organism>
    <name type="scientific">Buchnera aphidicola subsp. Schizaphis graminum (strain Sg)</name>
    <dbReference type="NCBI Taxonomy" id="198804"/>
    <lineage>
        <taxon>Bacteria</taxon>
        <taxon>Pseudomonadati</taxon>
        <taxon>Pseudomonadota</taxon>
        <taxon>Gammaproteobacteria</taxon>
        <taxon>Enterobacterales</taxon>
        <taxon>Erwiniaceae</taxon>
        <taxon>Buchnera</taxon>
    </lineage>
</organism>
<accession>P42387</accession>
<name>TRPE_BUCAP</name>
<keyword id="KW-0028">Amino-acid biosynthesis</keyword>
<keyword id="KW-0057">Aromatic amino acid biosynthesis</keyword>
<keyword id="KW-0456">Lyase</keyword>
<keyword id="KW-0460">Magnesium</keyword>
<keyword id="KW-0479">Metal-binding</keyword>
<keyword id="KW-0614">Plasmid</keyword>
<keyword id="KW-0822">Tryptophan biosynthesis</keyword>
<proteinExistence type="inferred from homology"/>
<gene>
    <name type="primary">trpE</name>
    <name type="ordered locus">BUsg_PT1</name>
</gene>
<feature type="chain" id="PRO_0000154081" description="Anthranilate synthase component 1">
    <location>
        <begin position="1"/>
        <end position="515"/>
    </location>
</feature>
<feature type="binding site" evidence="2">
    <location>
        <position position="40"/>
    </location>
    <ligand>
        <name>L-tryptophan</name>
        <dbReference type="ChEBI" id="CHEBI:57912"/>
    </ligand>
</feature>
<feature type="binding site" evidence="2">
    <location>
        <begin position="291"/>
        <end position="293"/>
    </location>
    <ligand>
        <name>L-tryptophan</name>
        <dbReference type="ChEBI" id="CHEBI:57912"/>
    </ligand>
</feature>
<feature type="binding site" evidence="2">
    <location>
        <begin position="328"/>
        <end position="329"/>
    </location>
    <ligand>
        <name>chorismate</name>
        <dbReference type="ChEBI" id="CHEBI:29748"/>
    </ligand>
</feature>
<feature type="binding site" evidence="2">
    <location>
        <position position="361"/>
    </location>
    <ligand>
        <name>Mg(2+)</name>
        <dbReference type="ChEBI" id="CHEBI:18420"/>
    </ligand>
</feature>
<feature type="binding site" evidence="2">
    <location>
        <position position="449"/>
    </location>
    <ligand>
        <name>chorismate</name>
        <dbReference type="ChEBI" id="CHEBI:29748"/>
    </ligand>
</feature>
<feature type="binding site" evidence="2">
    <location>
        <position position="469"/>
    </location>
    <ligand>
        <name>chorismate</name>
        <dbReference type="ChEBI" id="CHEBI:29748"/>
    </ligand>
</feature>
<feature type="binding site" evidence="2">
    <location>
        <begin position="483"/>
        <end position="485"/>
    </location>
    <ligand>
        <name>chorismate</name>
        <dbReference type="ChEBI" id="CHEBI:29748"/>
    </ligand>
</feature>
<feature type="binding site" evidence="2">
    <location>
        <position position="485"/>
    </location>
    <ligand>
        <name>chorismate</name>
        <dbReference type="ChEBI" id="CHEBI:29748"/>
    </ligand>
</feature>
<feature type="binding site" evidence="2">
    <location>
        <position position="498"/>
    </location>
    <ligand>
        <name>Mg(2+)</name>
        <dbReference type="ChEBI" id="CHEBI:18420"/>
    </ligand>
</feature>
<dbReference type="EC" id="4.1.3.27"/>
<dbReference type="EMBL" id="Z21938">
    <property type="protein sequence ID" value="CAA79931.1"/>
    <property type="molecule type" value="Genomic_DNA"/>
</dbReference>
<dbReference type="EMBL" id="Z21938">
    <property type="protein sequence ID" value="CAA79933.1"/>
    <property type="molecule type" value="Genomic_DNA"/>
</dbReference>
<dbReference type="PIR" id="I40052">
    <property type="entry name" value="I40052"/>
</dbReference>
<dbReference type="SMR" id="P42387"/>
<dbReference type="UniPathway" id="UPA00035">
    <property type="reaction ID" value="UER00040"/>
</dbReference>
<dbReference type="Proteomes" id="UP000000416">
    <property type="component" value="Plasmid pBsc"/>
</dbReference>
<dbReference type="GO" id="GO:0004049">
    <property type="term" value="F:anthranilate synthase activity"/>
    <property type="evidence" value="ECO:0007669"/>
    <property type="project" value="UniProtKB-EC"/>
</dbReference>
<dbReference type="GO" id="GO:0046872">
    <property type="term" value="F:metal ion binding"/>
    <property type="evidence" value="ECO:0007669"/>
    <property type="project" value="UniProtKB-KW"/>
</dbReference>
<dbReference type="GO" id="GO:0000162">
    <property type="term" value="P:L-tryptophan biosynthetic process"/>
    <property type="evidence" value="ECO:0007669"/>
    <property type="project" value="UniProtKB-UniPathway"/>
</dbReference>
<dbReference type="Gene3D" id="3.60.120.10">
    <property type="entry name" value="Anthranilate synthase"/>
    <property type="match status" value="1"/>
</dbReference>
<dbReference type="InterPro" id="IPR005801">
    <property type="entry name" value="ADC_synthase"/>
</dbReference>
<dbReference type="InterPro" id="IPR019999">
    <property type="entry name" value="Anth_synth_I-like"/>
</dbReference>
<dbReference type="InterPro" id="IPR006805">
    <property type="entry name" value="Anth_synth_I_N"/>
</dbReference>
<dbReference type="InterPro" id="IPR005257">
    <property type="entry name" value="Anth_synth_I_TrpE"/>
</dbReference>
<dbReference type="InterPro" id="IPR015890">
    <property type="entry name" value="Chorismate_C"/>
</dbReference>
<dbReference type="NCBIfam" id="NF010079">
    <property type="entry name" value="PRK13564.1"/>
    <property type="match status" value="1"/>
</dbReference>
<dbReference type="NCBIfam" id="TIGR00565">
    <property type="entry name" value="trpE_proteo"/>
    <property type="match status" value="1"/>
</dbReference>
<dbReference type="PANTHER" id="PTHR11236">
    <property type="entry name" value="AMINOBENZOATE/ANTHRANILATE SYNTHASE"/>
    <property type="match status" value="1"/>
</dbReference>
<dbReference type="PANTHER" id="PTHR11236:SF49">
    <property type="entry name" value="ANTHRANILATE SYNTHASE COMPONENT 1"/>
    <property type="match status" value="1"/>
</dbReference>
<dbReference type="Pfam" id="PF04715">
    <property type="entry name" value="Anth_synt_I_N"/>
    <property type="match status" value="1"/>
</dbReference>
<dbReference type="Pfam" id="PF00425">
    <property type="entry name" value="Chorismate_bind"/>
    <property type="match status" value="1"/>
</dbReference>
<dbReference type="PIRSF" id="PIRSF001373">
    <property type="entry name" value="TrpE"/>
    <property type="match status" value="1"/>
</dbReference>
<dbReference type="PRINTS" id="PR00095">
    <property type="entry name" value="ANTSNTHASEI"/>
</dbReference>
<dbReference type="SUPFAM" id="SSF56322">
    <property type="entry name" value="ADC synthase"/>
    <property type="match status" value="1"/>
</dbReference>
<geneLocation type="plasmid">
    <name>pBSc</name>
</geneLocation>
<comment type="function">
    <text evidence="1">Part of a heterotetrameric complex that catalyzes the two-step biosynthesis of anthranilate, an intermediate in the biosynthesis of L-tryptophan. In the first step, the glutamine-binding beta subunit (TrpG) of anthranilate synthase (AS) provides the glutamine amidotransferase activity which generates ammonia as a substrate that, along with chorismate, is used in the second step, catalyzed by the large alpha subunit of AS (TrpE) to produce anthranilate. In the absence of TrpG, TrpE can synthesize anthranilate directly from chorismate and high concentrations of ammonia (By similarity).</text>
</comment>
<comment type="catalytic activity">
    <reaction>
        <text>chorismate + L-glutamine = anthranilate + pyruvate + L-glutamate + H(+)</text>
        <dbReference type="Rhea" id="RHEA:21732"/>
        <dbReference type="ChEBI" id="CHEBI:15361"/>
        <dbReference type="ChEBI" id="CHEBI:15378"/>
        <dbReference type="ChEBI" id="CHEBI:16567"/>
        <dbReference type="ChEBI" id="CHEBI:29748"/>
        <dbReference type="ChEBI" id="CHEBI:29985"/>
        <dbReference type="ChEBI" id="CHEBI:58359"/>
        <dbReference type="EC" id="4.1.3.27"/>
    </reaction>
</comment>
<comment type="cofactor">
    <cofactor evidence="2">
        <name>Mg(2+)</name>
        <dbReference type="ChEBI" id="CHEBI:18420"/>
    </cofactor>
    <text evidence="2">Binds 1 Mg(2+) ion per subunit.</text>
</comment>
<comment type="activity regulation">
    <text evidence="1">Feedback inhibited by tryptophan.</text>
</comment>
<comment type="pathway">
    <text>Amino-acid biosynthesis; L-tryptophan biosynthesis; L-tryptophan from chorismate: step 1/5.</text>
</comment>
<comment type="subunit">
    <text evidence="1">Heterotetramer consisting of two non-identical subunits: a beta subunit (TrpG) and a large alpha subunit (TrpE).</text>
</comment>
<comment type="similarity">
    <text evidence="3">Belongs to the anthranilate synthase component I family.</text>
</comment>
<sequence length="515" mass="58687">MSKNPYEIEIIQKTAPYHPDPTMIFNHLCASRPGTLLLETAEVNKKRDLESIMIIDSAMRISSEDNSVKLTPLSINGTDILSTLKKTIPKKIEIYEKNNSTILVFPKIKKNIDEDKKLFSLSVFDAFRLMIRIFENREKKSKAMFFGGLFSYDLISVFESLPKLKGNQKCSNFCFYLAETLLVLDHQKKTCLIQNSLFSKNLKERKRIKKRSVEIERKLNEKLKLIPKTKIKDINLTSNMNNFEYGTIIKKLQKLIQKGEIFQVVPSRKFYLPCPNPLSAYQKLKKSNPSPYMFFMQDQDFTLFGASPESSLKYDEKTRKIELYPIAGTRPRGKTEDGNLDLDLDSRIELEMRTNHKELAEHLMLVDLARNDLARICKPGSRYVSDLVRVDRYSHVMHLVSRVIGELREGLDALHAYASCMNMGTLTGAPKVRAMQLIAEHEGEKRGSYGGAIGYFTDLGNLDTCITIRSAYVEKQVATIQAGAGIVYNSIPENEVNESLNKAQAVINAIKNAHY</sequence>
<protein>
    <recommendedName>
        <fullName>Anthranilate synthase component 1</fullName>
        <shortName>AS</shortName>
        <shortName>ASI</shortName>
        <ecNumber>4.1.3.27</ecNumber>
    </recommendedName>
</protein>
<reference key="1">
    <citation type="journal article" date="1994" name="Proc. Natl. Acad. Sci. U.S.A.">
        <title>Amplification of trpEG: adaptation of Buchnera aphidicola to an endosymbiotic association with aphids.</title>
        <authorList>
            <person name="Lai C.-Y."/>
            <person name="Baumann L."/>
            <person name="Baumann P."/>
        </authorList>
    </citation>
    <scope>NUCLEOTIDE SEQUENCE [LARGE SCALE GENOMIC DNA]</scope>
    <source>
        <strain>Sg</strain>
    </source>
</reference>
<evidence type="ECO:0000250" key="1"/>
<evidence type="ECO:0000250" key="2">
    <source>
        <dbReference type="UniProtKB" id="P00897"/>
    </source>
</evidence>
<evidence type="ECO:0000305" key="3"/>